<dbReference type="EMBL" id="CU928145">
    <property type="protein sequence ID" value="CAU98261.1"/>
    <property type="molecule type" value="Genomic_DNA"/>
</dbReference>
<dbReference type="RefSeq" id="WP_001295452.1">
    <property type="nucleotide sequence ID" value="NZ_CP028304.1"/>
</dbReference>
<dbReference type="SMR" id="B7LA07"/>
<dbReference type="KEGG" id="eck:EC55989_2391"/>
<dbReference type="HOGENOM" id="CLU_113736_1_1_6"/>
<dbReference type="Proteomes" id="UP000000746">
    <property type="component" value="Chromosome"/>
</dbReference>
<dbReference type="GO" id="GO:0005886">
    <property type="term" value="C:plasma membrane"/>
    <property type="evidence" value="ECO:0007669"/>
    <property type="project" value="UniProtKB-SubCell"/>
</dbReference>
<dbReference type="HAMAP" id="MF_01144">
    <property type="entry name" value="UPF0299"/>
    <property type="match status" value="1"/>
</dbReference>
<dbReference type="InterPro" id="IPR005538">
    <property type="entry name" value="LrgA/CidA"/>
</dbReference>
<dbReference type="InterPro" id="IPR022957">
    <property type="entry name" value="Uncharacterised_UPF0299"/>
</dbReference>
<dbReference type="NCBIfam" id="NF002494">
    <property type="entry name" value="PRK01821.1"/>
    <property type="match status" value="1"/>
</dbReference>
<dbReference type="PANTHER" id="PTHR33931">
    <property type="entry name" value="HOLIN-LIKE PROTEIN CIDA-RELATED"/>
    <property type="match status" value="1"/>
</dbReference>
<dbReference type="PANTHER" id="PTHR33931:SF5">
    <property type="entry name" value="UPF0299 MEMBRANE PROTEIN YOHJ"/>
    <property type="match status" value="1"/>
</dbReference>
<dbReference type="Pfam" id="PF03788">
    <property type="entry name" value="LrgA"/>
    <property type="match status" value="1"/>
</dbReference>
<sequence>MSKTLNIIWQYLRAFVLIYACLYAGIFIASLLPVTIPGSIIGMLILFVLLALQILPAKWVNPGCYVLIRYMALLFVPIGVGVMQYFDLLRAQFGPVVVSCAVSTLVVFLVVSWSSQLVHGERKVVGQKGSEE</sequence>
<organism>
    <name type="scientific">Escherichia coli (strain 55989 / EAEC)</name>
    <dbReference type="NCBI Taxonomy" id="585055"/>
    <lineage>
        <taxon>Bacteria</taxon>
        <taxon>Pseudomonadati</taxon>
        <taxon>Pseudomonadota</taxon>
        <taxon>Gammaproteobacteria</taxon>
        <taxon>Enterobacterales</taxon>
        <taxon>Enterobacteriaceae</taxon>
        <taxon>Escherichia</taxon>
    </lineage>
</organism>
<gene>
    <name evidence="1" type="primary">yohJ</name>
    <name type="ordered locus">EC55989_2391</name>
</gene>
<accession>B7LA07</accession>
<protein>
    <recommendedName>
        <fullName evidence="1">UPF0299 membrane protein YohJ</fullName>
    </recommendedName>
</protein>
<comment type="subcellular location">
    <subcellularLocation>
        <location evidence="1">Cell inner membrane</location>
        <topology evidence="1">Multi-pass membrane protein</topology>
    </subcellularLocation>
</comment>
<comment type="similarity">
    <text evidence="1">Belongs to the UPF0299 family.</text>
</comment>
<feature type="chain" id="PRO_1000164107" description="UPF0299 membrane protein YohJ">
    <location>
        <begin position="1"/>
        <end position="132"/>
    </location>
</feature>
<feature type="transmembrane region" description="Helical" evidence="1">
    <location>
        <begin position="7"/>
        <end position="27"/>
    </location>
</feature>
<feature type="transmembrane region" description="Helical" evidence="1">
    <location>
        <begin position="31"/>
        <end position="51"/>
    </location>
</feature>
<feature type="transmembrane region" description="Helical" evidence="1">
    <location>
        <begin position="63"/>
        <end position="83"/>
    </location>
</feature>
<feature type="transmembrane region" description="Helical" evidence="1">
    <location>
        <begin position="93"/>
        <end position="113"/>
    </location>
</feature>
<proteinExistence type="inferred from homology"/>
<evidence type="ECO:0000255" key="1">
    <source>
        <dbReference type="HAMAP-Rule" id="MF_01144"/>
    </source>
</evidence>
<keyword id="KW-0997">Cell inner membrane</keyword>
<keyword id="KW-1003">Cell membrane</keyword>
<keyword id="KW-0472">Membrane</keyword>
<keyword id="KW-1185">Reference proteome</keyword>
<keyword id="KW-0812">Transmembrane</keyword>
<keyword id="KW-1133">Transmembrane helix</keyword>
<reference key="1">
    <citation type="journal article" date="2009" name="PLoS Genet.">
        <title>Organised genome dynamics in the Escherichia coli species results in highly diverse adaptive paths.</title>
        <authorList>
            <person name="Touchon M."/>
            <person name="Hoede C."/>
            <person name="Tenaillon O."/>
            <person name="Barbe V."/>
            <person name="Baeriswyl S."/>
            <person name="Bidet P."/>
            <person name="Bingen E."/>
            <person name="Bonacorsi S."/>
            <person name="Bouchier C."/>
            <person name="Bouvet O."/>
            <person name="Calteau A."/>
            <person name="Chiapello H."/>
            <person name="Clermont O."/>
            <person name="Cruveiller S."/>
            <person name="Danchin A."/>
            <person name="Diard M."/>
            <person name="Dossat C."/>
            <person name="Karoui M.E."/>
            <person name="Frapy E."/>
            <person name="Garry L."/>
            <person name="Ghigo J.M."/>
            <person name="Gilles A.M."/>
            <person name="Johnson J."/>
            <person name="Le Bouguenec C."/>
            <person name="Lescat M."/>
            <person name="Mangenot S."/>
            <person name="Martinez-Jehanne V."/>
            <person name="Matic I."/>
            <person name="Nassif X."/>
            <person name="Oztas S."/>
            <person name="Petit M.A."/>
            <person name="Pichon C."/>
            <person name="Rouy Z."/>
            <person name="Ruf C.S."/>
            <person name="Schneider D."/>
            <person name="Tourret J."/>
            <person name="Vacherie B."/>
            <person name="Vallenet D."/>
            <person name="Medigue C."/>
            <person name="Rocha E.P.C."/>
            <person name="Denamur E."/>
        </authorList>
    </citation>
    <scope>NUCLEOTIDE SEQUENCE [LARGE SCALE GENOMIC DNA]</scope>
    <source>
        <strain>55989 / EAEC</strain>
    </source>
</reference>
<name>YOHJ_ECO55</name>